<gene>
    <name evidence="1" type="primary">rpsM</name>
    <name type="ordered locus">SRU_1057</name>
</gene>
<name>RS13_SALRD</name>
<dbReference type="EMBL" id="CP000159">
    <property type="protein sequence ID" value="ABC44478.1"/>
    <property type="molecule type" value="Genomic_DNA"/>
</dbReference>
<dbReference type="RefSeq" id="WP_011403817.1">
    <property type="nucleotide sequence ID" value="NC_007677.1"/>
</dbReference>
<dbReference type="RefSeq" id="YP_445189.1">
    <property type="nucleotide sequence ID" value="NC_007677.1"/>
</dbReference>
<dbReference type="SMR" id="Q2S3P2"/>
<dbReference type="STRING" id="309807.SRU_1057"/>
<dbReference type="EnsemblBacteria" id="ABC44478">
    <property type="protein sequence ID" value="ABC44478"/>
    <property type="gene ID" value="SRU_1057"/>
</dbReference>
<dbReference type="GeneID" id="83727986"/>
<dbReference type="KEGG" id="sru:SRU_1057"/>
<dbReference type="PATRIC" id="fig|309807.25.peg.1095"/>
<dbReference type="eggNOG" id="COG0099">
    <property type="taxonomic scope" value="Bacteria"/>
</dbReference>
<dbReference type="HOGENOM" id="CLU_103849_1_2_10"/>
<dbReference type="OrthoDB" id="9803610at2"/>
<dbReference type="Proteomes" id="UP000008674">
    <property type="component" value="Chromosome"/>
</dbReference>
<dbReference type="GO" id="GO:0005829">
    <property type="term" value="C:cytosol"/>
    <property type="evidence" value="ECO:0007669"/>
    <property type="project" value="TreeGrafter"/>
</dbReference>
<dbReference type="GO" id="GO:0015935">
    <property type="term" value="C:small ribosomal subunit"/>
    <property type="evidence" value="ECO:0007669"/>
    <property type="project" value="TreeGrafter"/>
</dbReference>
<dbReference type="GO" id="GO:0019843">
    <property type="term" value="F:rRNA binding"/>
    <property type="evidence" value="ECO:0007669"/>
    <property type="project" value="UniProtKB-UniRule"/>
</dbReference>
<dbReference type="GO" id="GO:0003735">
    <property type="term" value="F:structural constituent of ribosome"/>
    <property type="evidence" value="ECO:0007669"/>
    <property type="project" value="InterPro"/>
</dbReference>
<dbReference type="GO" id="GO:0000049">
    <property type="term" value="F:tRNA binding"/>
    <property type="evidence" value="ECO:0007669"/>
    <property type="project" value="UniProtKB-UniRule"/>
</dbReference>
<dbReference type="GO" id="GO:0006412">
    <property type="term" value="P:translation"/>
    <property type="evidence" value="ECO:0007669"/>
    <property type="project" value="UniProtKB-UniRule"/>
</dbReference>
<dbReference type="FunFam" id="1.10.8.50:FF:000001">
    <property type="entry name" value="30S ribosomal protein S13"/>
    <property type="match status" value="1"/>
</dbReference>
<dbReference type="FunFam" id="4.10.910.10:FF:000001">
    <property type="entry name" value="30S ribosomal protein S13"/>
    <property type="match status" value="1"/>
</dbReference>
<dbReference type="Gene3D" id="1.10.8.50">
    <property type="match status" value="1"/>
</dbReference>
<dbReference type="Gene3D" id="4.10.910.10">
    <property type="entry name" value="30s ribosomal protein s13, domain 2"/>
    <property type="match status" value="1"/>
</dbReference>
<dbReference type="HAMAP" id="MF_01315">
    <property type="entry name" value="Ribosomal_uS13"/>
    <property type="match status" value="1"/>
</dbReference>
<dbReference type="InterPro" id="IPR027437">
    <property type="entry name" value="Rbsml_uS13_C"/>
</dbReference>
<dbReference type="InterPro" id="IPR001892">
    <property type="entry name" value="Ribosomal_uS13"/>
</dbReference>
<dbReference type="InterPro" id="IPR010979">
    <property type="entry name" value="Ribosomal_uS13-like_H2TH"/>
</dbReference>
<dbReference type="InterPro" id="IPR019980">
    <property type="entry name" value="Ribosomal_uS13_bac-type"/>
</dbReference>
<dbReference type="InterPro" id="IPR018269">
    <property type="entry name" value="Ribosomal_uS13_CS"/>
</dbReference>
<dbReference type="NCBIfam" id="TIGR03631">
    <property type="entry name" value="uS13_bact"/>
    <property type="match status" value="1"/>
</dbReference>
<dbReference type="PANTHER" id="PTHR10871">
    <property type="entry name" value="30S RIBOSOMAL PROTEIN S13/40S RIBOSOMAL PROTEIN S18"/>
    <property type="match status" value="1"/>
</dbReference>
<dbReference type="PANTHER" id="PTHR10871:SF1">
    <property type="entry name" value="SMALL RIBOSOMAL SUBUNIT PROTEIN US13M"/>
    <property type="match status" value="1"/>
</dbReference>
<dbReference type="Pfam" id="PF00416">
    <property type="entry name" value="Ribosomal_S13"/>
    <property type="match status" value="1"/>
</dbReference>
<dbReference type="PIRSF" id="PIRSF002134">
    <property type="entry name" value="Ribosomal_S13"/>
    <property type="match status" value="1"/>
</dbReference>
<dbReference type="SUPFAM" id="SSF46946">
    <property type="entry name" value="S13-like H2TH domain"/>
    <property type="match status" value="1"/>
</dbReference>
<dbReference type="PROSITE" id="PS00646">
    <property type="entry name" value="RIBOSOMAL_S13_1"/>
    <property type="match status" value="1"/>
</dbReference>
<dbReference type="PROSITE" id="PS50159">
    <property type="entry name" value="RIBOSOMAL_S13_2"/>
    <property type="match status" value="1"/>
</dbReference>
<comment type="function">
    <text evidence="1">Located at the top of the head of the 30S subunit, it contacts several helices of the 16S rRNA. In the 70S ribosome it contacts the 23S rRNA (bridge B1a) and protein L5 of the 50S subunit (bridge B1b), connecting the 2 subunits; these bridges are implicated in subunit movement. Contacts the tRNAs in the A and P-sites.</text>
</comment>
<comment type="subunit">
    <text evidence="1">Part of the 30S ribosomal subunit. Forms a loose heterodimer with protein S19. Forms two bridges to the 50S subunit in the 70S ribosome.</text>
</comment>
<comment type="similarity">
    <text evidence="1">Belongs to the universal ribosomal protein uS13 family.</text>
</comment>
<organism>
    <name type="scientific">Salinibacter ruber (strain DSM 13855 / M31)</name>
    <dbReference type="NCBI Taxonomy" id="309807"/>
    <lineage>
        <taxon>Bacteria</taxon>
        <taxon>Pseudomonadati</taxon>
        <taxon>Rhodothermota</taxon>
        <taxon>Rhodothermia</taxon>
        <taxon>Rhodothermales</taxon>
        <taxon>Salinibacteraceae</taxon>
        <taxon>Salinibacter</taxon>
    </lineage>
</organism>
<proteinExistence type="inferred from homology"/>
<accession>Q2S3P2</accession>
<keyword id="KW-1185">Reference proteome</keyword>
<keyword id="KW-0687">Ribonucleoprotein</keyword>
<keyword id="KW-0689">Ribosomal protein</keyword>
<keyword id="KW-0694">RNA-binding</keyword>
<keyword id="KW-0699">rRNA-binding</keyword>
<keyword id="KW-0820">tRNA-binding</keyword>
<feature type="chain" id="PRO_0000306701" description="Small ribosomal subunit protein uS13">
    <location>
        <begin position="1"/>
        <end position="127"/>
    </location>
</feature>
<feature type="region of interest" description="Disordered" evidence="2">
    <location>
        <begin position="90"/>
        <end position="127"/>
    </location>
</feature>
<feature type="compositionally biased region" description="Basic residues" evidence="2">
    <location>
        <begin position="105"/>
        <end position="117"/>
    </location>
</feature>
<evidence type="ECO:0000255" key="1">
    <source>
        <dbReference type="HAMAP-Rule" id="MF_01315"/>
    </source>
</evidence>
<evidence type="ECO:0000256" key="2">
    <source>
        <dbReference type="SAM" id="MobiDB-lite"/>
    </source>
</evidence>
<evidence type="ECO:0000305" key="3"/>
<sequence length="127" mass="14679">MPRIEGVDVPDDKRGEIALTDIYGVGQSRASEILEKAEVSVDKRPREWTESETKRVRRIIEEDYTVEGQLRTEVQMNIKRLKEIGCYRGKRHREGLPVNGQRTRTNARTRKGKRKTVAGRSQSTQKK</sequence>
<protein>
    <recommendedName>
        <fullName evidence="1">Small ribosomal subunit protein uS13</fullName>
    </recommendedName>
    <alternativeName>
        <fullName evidence="3">30S ribosomal protein S13</fullName>
    </alternativeName>
</protein>
<reference key="1">
    <citation type="journal article" date="2005" name="Proc. Natl. Acad. Sci. U.S.A.">
        <title>The genome of Salinibacter ruber: convergence and gene exchange among hyperhalophilic bacteria and archaea.</title>
        <authorList>
            <person name="Mongodin E.F."/>
            <person name="Nelson K.E."/>
            <person name="Daugherty S."/>
            <person name="DeBoy R.T."/>
            <person name="Wister J."/>
            <person name="Khouri H."/>
            <person name="Weidman J."/>
            <person name="Walsh D.A."/>
            <person name="Papke R.T."/>
            <person name="Sanchez Perez G."/>
            <person name="Sharma A.K."/>
            <person name="Nesbo C.L."/>
            <person name="MacLeod D."/>
            <person name="Bapteste E."/>
            <person name="Doolittle W.F."/>
            <person name="Charlebois R.L."/>
            <person name="Legault B."/>
            <person name="Rodriguez-Valera F."/>
        </authorList>
    </citation>
    <scope>NUCLEOTIDE SEQUENCE [LARGE SCALE GENOMIC DNA]</scope>
    <source>
        <strain>DSM 13855 / CECT 5946 / M31</strain>
    </source>
</reference>